<proteinExistence type="predicted"/>
<accession>P30344</accession>
<dbReference type="EMBL" id="X65467">
    <property type="protein sequence ID" value="CAA46465.1"/>
    <property type="molecule type" value="Genomic_DNA"/>
</dbReference>
<dbReference type="PIR" id="S30173">
    <property type="entry name" value="S30173"/>
</dbReference>
<dbReference type="TCDB" id="5.A.1.4.1">
    <property type="family name" value="the disulfide bond oxidoreductase d (dsbd) family"/>
</dbReference>
<dbReference type="GO" id="GO:0046872">
    <property type="term" value="F:metal ion binding"/>
    <property type="evidence" value="ECO:0007669"/>
    <property type="project" value="UniProtKB-KW"/>
</dbReference>
<dbReference type="GO" id="GO:0046689">
    <property type="term" value="P:response to mercury ion"/>
    <property type="evidence" value="ECO:0007669"/>
    <property type="project" value="UniProtKB-KW"/>
</dbReference>
<dbReference type="InterPro" id="IPR051790">
    <property type="entry name" value="Cytochrome_c-biogenesis_DsbD"/>
</dbReference>
<dbReference type="PANTHER" id="PTHR31272">
    <property type="entry name" value="CYTOCHROME C-TYPE BIOGENESIS PROTEIN HI_1454-RELATED"/>
    <property type="match status" value="1"/>
</dbReference>
<dbReference type="PANTHER" id="PTHR31272:SF4">
    <property type="entry name" value="CYTOCHROME C-TYPE BIOGENESIS PROTEIN HI_1454-RELATED"/>
    <property type="match status" value="1"/>
</dbReference>
<reference key="1">
    <citation type="journal article" date="1992" name="Mol. Gen. Genet.">
        <title>Cloning and DNA sequence analysis of the mercury resistance genes of Streptomyces lividans.</title>
        <authorList>
            <person name="Sedlmeier R."/>
            <person name="Altenbuchner J."/>
        </authorList>
    </citation>
    <scope>NUCLEOTIDE SEQUENCE [GENOMIC DNA]</scope>
    <source>
        <strain>66 / 1326</strain>
    </source>
</reference>
<keyword id="KW-0475">Mercuric resistance</keyword>
<keyword id="KW-0476">Mercury</keyword>
<keyword id="KW-0479">Metal-binding</keyword>
<evidence type="ECO:0000255" key="1"/>
<name>MER4_STRLI</name>
<sequence length="319" mass="31553">MNGLLALAFAAGMLAPVNPCGFALLPAWITAALGDSDASPLPVRLTRALRSGAALTLGFAGTLAAAGLIVSAGARALIQAAPWLGLATGILLLLLGAVMLTGRTPSLRLHLTTSTRRSAGPPTARRMAAFGVGYAAASLSCTFGVLLAVIAQAQATASFAGLLAVFAAYAAGSAAVLLLVAVTTAAAGAALTRKITALARHGTRITAAVLVLTGAYLAWYWYPAATGGATTAAPGGGLATFSATATAWIQAHTTAIAVTAVVVVLAVAAAAIRHRTRQPARHSTPTGTAPSAAAADDCCAPLPVPTPASTDRDSDGHCC</sequence>
<organism>
    <name type="scientific">Streptomyces lividans</name>
    <dbReference type="NCBI Taxonomy" id="1916"/>
    <lineage>
        <taxon>Bacteria</taxon>
        <taxon>Bacillati</taxon>
        <taxon>Actinomycetota</taxon>
        <taxon>Actinomycetes</taxon>
        <taxon>Kitasatosporales</taxon>
        <taxon>Streptomycetaceae</taxon>
        <taxon>Streptomyces</taxon>
    </lineage>
</organism>
<feature type="chain" id="PRO_0000096422" description="Mercury resistance probable Hg transport protein">
    <location>
        <begin position="1"/>
        <end position="319"/>
    </location>
</feature>
<feature type="binding site" evidence="1">
    <location>
        <position position="298"/>
    </location>
    <ligand>
        <name>Hg(2+)</name>
        <dbReference type="ChEBI" id="CHEBI:16793"/>
    </ligand>
</feature>
<feature type="binding site" evidence="1">
    <location>
        <position position="299"/>
    </location>
    <ligand>
        <name>Hg(2+)</name>
        <dbReference type="ChEBI" id="CHEBI:16793"/>
    </ligand>
</feature>
<feature type="binding site" evidence="1">
    <location>
        <position position="318"/>
    </location>
    <ligand>
        <name>Hg(2+)</name>
        <dbReference type="ChEBI" id="CHEBI:16793"/>
    </ligand>
</feature>
<feature type="binding site" evidence="1">
    <location>
        <position position="319"/>
    </location>
    <ligand>
        <name>Hg(2+)</name>
        <dbReference type="ChEBI" id="CHEBI:16793"/>
    </ligand>
</feature>
<protein>
    <recommendedName>
        <fullName>Mercury resistance probable Hg transport protein</fullName>
    </recommendedName>
</protein>